<gene>
    <name type="primary">katA</name>
    <name type="ordered locus">SAB1192</name>
</gene>
<keyword id="KW-0349">Heme</keyword>
<keyword id="KW-0376">Hydrogen peroxide</keyword>
<keyword id="KW-0408">Iron</keyword>
<keyword id="KW-0479">Metal-binding</keyword>
<keyword id="KW-0560">Oxidoreductase</keyword>
<keyword id="KW-0575">Peroxidase</keyword>
<dbReference type="EC" id="1.11.1.6"/>
<dbReference type="EMBL" id="AJ938182">
    <property type="protein sequence ID" value="CAI80881.1"/>
    <property type="status" value="ALT_INIT"/>
    <property type="molecule type" value="Genomic_DNA"/>
</dbReference>
<dbReference type="RefSeq" id="WP_000082539.1">
    <property type="nucleotide sequence ID" value="NC_007622.1"/>
</dbReference>
<dbReference type="SMR" id="Q2YXT2"/>
<dbReference type="KEGG" id="sab:SAB1192"/>
<dbReference type="HOGENOM" id="CLU_010645_2_0_9"/>
<dbReference type="GO" id="GO:0005737">
    <property type="term" value="C:cytoplasm"/>
    <property type="evidence" value="ECO:0007669"/>
    <property type="project" value="TreeGrafter"/>
</dbReference>
<dbReference type="GO" id="GO:0004096">
    <property type="term" value="F:catalase activity"/>
    <property type="evidence" value="ECO:0007669"/>
    <property type="project" value="UniProtKB-EC"/>
</dbReference>
<dbReference type="GO" id="GO:0020037">
    <property type="term" value="F:heme binding"/>
    <property type="evidence" value="ECO:0007669"/>
    <property type="project" value="InterPro"/>
</dbReference>
<dbReference type="GO" id="GO:0046872">
    <property type="term" value="F:metal ion binding"/>
    <property type="evidence" value="ECO:0007669"/>
    <property type="project" value="UniProtKB-KW"/>
</dbReference>
<dbReference type="GO" id="GO:0042744">
    <property type="term" value="P:hydrogen peroxide catabolic process"/>
    <property type="evidence" value="ECO:0007669"/>
    <property type="project" value="UniProtKB-KW"/>
</dbReference>
<dbReference type="GO" id="GO:0042542">
    <property type="term" value="P:response to hydrogen peroxide"/>
    <property type="evidence" value="ECO:0007669"/>
    <property type="project" value="TreeGrafter"/>
</dbReference>
<dbReference type="CDD" id="cd08156">
    <property type="entry name" value="catalase_clade_3"/>
    <property type="match status" value="1"/>
</dbReference>
<dbReference type="FunFam" id="2.40.180.10:FF:000001">
    <property type="entry name" value="Catalase"/>
    <property type="match status" value="1"/>
</dbReference>
<dbReference type="Gene3D" id="2.40.180.10">
    <property type="entry name" value="Catalase core domain"/>
    <property type="match status" value="1"/>
</dbReference>
<dbReference type="InterPro" id="IPR018028">
    <property type="entry name" value="Catalase"/>
</dbReference>
<dbReference type="InterPro" id="IPR040333">
    <property type="entry name" value="Catalase_3"/>
</dbReference>
<dbReference type="InterPro" id="IPR024708">
    <property type="entry name" value="Catalase_AS"/>
</dbReference>
<dbReference type="InterPro" id="IPR024711">
    <property type="entry name" value="Catalase_clade1/3"/>
</dbReference>
<dbReference type="InterPro" id="IPR011614">
    <property type="entry name" value="Catalase_core"/>
</dbReference>
<dbReference type="InterPro" id="IPR002226">
    <property type="entry name" value="Catalase_haem_BS"/>
</dbReference>
<dbReference type="InterPro" id="IPR010582">
    <property type="entry name" value="Catalase_immune_responsive"/>
</dbReference>
<dbReference type="InterPro" id="IPR020835">
    <property type="entry name" value="Catalase_sf"/>
</dbReference>
<dbReference type="PANTHER" id="PTHR11465">
    <property type="entry name" value="CATALASE"/>
    <property type="match status" value="1"/>
</dbReference>
<dbReference type="PANTHER" id="PTHR11465:SF61">
    <property type="entry name" value="CATALASE"/>
    <property type="match status" value="1"/>
</dbReference>
<dbReference type="Pfam" id="PF00199">
    <property type="entry name" value="Catalase"/>
    <property type="match status" value="1"/>
</dbReference>
<dbReference type="Pfam" id="PF06628">
    <property type="entry name" value="Catalase-rel"/>
    <property type="match status" value="1"/>
</dbReference>
<dbReference type="PIRSF" id="PIRSF038928">
    <property type="entry name" value="Catalase_clade1-3"/>
    <property type="match status" value="1"/>
</dbReference>
<dbReference type="PRINTS" id="PR00067">
    <property type="entry name" value="CATALASE"/>
</dbReference>
<dbReference type="SMART" id="SM01060">
    <property type="entry name" value="Catalase"/>
    <property type="match status" value="1"/>
</dbReference>
<dbReference type="SUPFAM" id="SSF56634">
    <property type="entry name" value="Heme-dependent catalase-like"/>
    <property type="match status" value="1"/>
</dbReference>
<dbReference type="PROSITE" id="PS00437">
    <property type="entry name" value="CATALASE_1"/>
    <property type="match status" value="1"/>
</dbReference>
<dbReference type="PROSITE" id="PS00438">
    <property type="entry name" value="CATALASE_2"/>
    <property type="match status" value="1"/>
</dbReference>
<dbReference type="PROSITE" id="PS51402">
    <property type="entry name" value="CATALASE_3"/>
    <property type="match status" value="1"/>
</dbReference>
<name>CATA_STAAB</name>
<proteinExistence type="inferred from homology"/>
<accession>Q2YXT2</accession>
<sequence>MSQQDKKLTGVFGHPVSDRENSMTAGPRGPLLMQDIYFLEQMSQFDREVIPERRMHAKGSGAFGTFTVTKDITKYTNAKIFSEIGKQTEMFARFSTVAGERGAADAERDIRGFALKFYTEEGNWDLVGNNTPVFFFRDPKLFVSLNRAVKRDPRTNMRDAQNNWDFWTGLPEALHQVTILMSDRGIPKDLRHMHGFGSHTYSMYNDSGERVWVKFHFRTQQGIENLTDEEAAEIIATDRDSSQRDLFEAIEKGDYPKWTMYIQVMTEEQAKNHKDNPFDLTKVWYHDEYPLIEVGEFELNRNPDNYFMDVEQAAFAPTNIIPGLDFSPDKMLQGRLFSYGDAQRYRLGVNHWQIPVNQPKGVGIENICPFSRDGQMRVVDNNQGGGTHYYPNNHGKFDSQPEYKKPPFPTDGYGYEYNQRQDDDNYFEQPGKLFRLQSEDAKERIFTNTANAMEGVTDDVKRRHIRHCYKADPEYGKGVAKALGIDINSIDLETENDETYENFEK</sequence>
<reference key="1">
    <citation type="journal article" date="2007" name="PLoS ONE">
        <title>Molecular correlates of host specialization in Staphylococcus aureus.</title>
        <authorList>
            <person name="Herron-Olson L."/>
            <person name="Fitzgerald J.R."/>
            <person name="Musser J.M."/>
            <person name="Kapur V."/>
        </authorList>
    </citation>
    <scope>NUCLEOTIDE SEQUENCE [LARGE SCALE GENOMIC DNA]</scope>
    <source>
        <strain>bovine RF122 / ET3-1</strain>
    </source>
</reference>
<feature type="chain" id="PRO_0000278272" description="Catalase">
    <location>
        <begin position="1"/>
        <end position="505"/>
    </location>
</feature>
<feature type="region of interest" description="Disordered" evidence="3">
    <location>
        <begin position="1"/>
        <end position="25"/>
    </location>
</feature>
<feature type="active site" evidence="2">
    <location>
        <position position="56"/>
    </location>
</feature>
<feature type="active site" evidence="2">
    <location>
        <position position="129"/>
    </location>
</feature>
<feature type="binding site" description="axial binding residue" evidence="1">
    <location>
        <position position="339"/>
    </location>
    <ligand>
        <name>heme</name>
        <dbReference type="ChEBI" id="CHEBI:30413"/>
    </ligand>
    <ligandPart>
        <name>Fe</name>
        <dbReference type="ChEBI" id="CHEBI:18248"/>
    </ligandPart>
</feature>
<organism>
    <name type="scientific">Staphylococcus aureus (strain bovine RF122 / ET3-1)</name>
    <dbReference type="NCBI Taxonomy" id="273036"/>
    <lineage>
        <taxon>Bacteria</taxon>
        <taxon>Bacillati</taxon>
        <taxon>Bacillota</taxon>
        <taxon>Bacilli</taxon>
        <taxon>Bacillales</taxon>
        <taxon>Staphylococcaceae</taxon>
        <taxon>Staphylococcus</taxon>
    </lineage>
</organism>
<evidence type="ECO:0000250" key="1"/>
<evidence type="ECO:0000255" key="2">
    <source>
        <dbReference type="PROSITE-ProRule" id="PRU10013"/>
    </source>
</evidence>
<evidence type="ECO:0000256" key="3">
    <source>
        <dbReference type="SAM" id="MobiDB-lite"/>
    </source>
</evidence>
<evidence type="ECO:0000305" key="4"/>
<protein>
    <recommendedName>
        <fullName>Catalase</fullName>
        <ecNumber>1.11.1.6</ecNumber>
    </recommendedName>
</protein>
<comment type="function">
    <text evidence="1">Decomposes hydrogen peroxide into water and oxygen; serves to protect cells from the toxic effects of hydrogen peroxide.</text>
</comment>
<comment type="catalytic activity">
    <reaction evidence="2">
        <text>2 H2O2 = O2 + 2 H2O</text>
        <dbReference type="Rhea" id="RHEA:20309"/>
        <dbReference type="ChEBI" id="CHEBI:15377"/>
        <dbReference type="ChEBI" id="CHEBI:15379"/>
        <dbReference type="ChEBI" id="CHEBI:16240"/>
        <dbReference type="EC" id="1.11.1.6"/>
    </reaction>
</comment>
<comment type="cofactor">
    <cofactor evidence="1">
        <name>heme</name>
        <dbReference type="ChEBI" id="CHEBI:30413"/>
    </cofactor>
</comment>
<comment type="subunit">
    <text evidence="1">Homodimer.</text>
</comment>
<comment type="similarity">
    <text evidence="4">Belongs to the catalase family.</text>
</comment>
<comment type="sequence caution" evidence="4">
    <conflict type="erroneous initiation">
        <sequence resource="EMBL-CDS" id="CAI80881"/>
    </conflict>
</comment>